<dbReference type="EC" id="2.7.1.4"/>
<dbReference type="EMBL" id="X61005">
    <property type="protein sequence ID" value="CAA43323.1"/>
    <property type="molecule type" value="Genomic_DNA"/>
</dbReference>
<dbReference type="PIR" id="S18524">
    <property type="entry name" value="S18524"/>
</dbReference>
<dbReference type="SMR" id="P26984"/>
<dbReference type="GO" id="GO:0005524">
    <property type="term" value="F:ATP binding"/>
    <property type="evidence" value="ECO:0007669"/>
    <property type="project" value="UniProtKB-KW"/>
</dbReference>
<dbReference type="GO" id="GO:0008865">
    <property type="term" value="F:fructokinase activity"/>
    <property type="evidence" value="ECO:0007669"/>
    <property type="project" value="UniProtKB-EC"/>
</dbReference>
<dbReference type="GO" id="GO:0006000">
    <property type="term" value="P:fructose metabolic process"/>
    <property type="evidence" value="ECO:0007669"/>
    <property type="project" value="UniProtKB-ARBA"/>
</dbReference>
<dbReference type="CDD" id="cd01167">
    <property type="entry name" value="bac_FRK"/>
    <property type="match status" value="1"/>
</dbReference>
<dbReference type="Gene3D" id="3.40.1190.20">
    <property type="match status" value="1"/>
</dbReference>
<dbReference type="InterPro" id="IPR002173">
    <property type="entry name" value="Carboh/pur_kinase_PfkB_CS"/>
</dbReference>
<dbReference type="InterPro" id="IPR050306">
    <property type="entry name" value="PfkB_Carbo_kinase"/>
</dbReference>
<dbReference type="InterPro" id="IPR011611">
    <property type="entry name" value="PfkB_dom"/>
</dbReference>
<dbReference type="InterPro" id="IPR002139">
    <property type="entry name" value="Ribo/fructo_kinase"/>
</dbReference>
<dbReference type="InterPro" id="IPR029056">
    <property type="entry name" value="Ribokinase-like"/>
</dbReference>
<dbReference type="NCBIfam" id="NF006957">
    <property type="entry name" value="PRK09434.1"/>
    <property type="match status" value="1"/>
</dbReference>
<dbReference type="PANTHER" id="PTHR43085">
    <property type="entry name" value="HEXOKINASE FAMILY MEMBER"/>
    <property type="match status" value="1"/>
</dbReference>
<dbReference type="PANTHER" id="PTHR43085:SF1">
    <property type="entry name" value="PSEUDOURIDINE KINASE-RELATED"/>
    <property type="match status" value="1"/>
</dbReference>
<dbReference type="Pfam" id="PF00294">
    <property type="entry name" value="PfkB"/>
    <property type="match status" value="1"/>
</dbReference>
<dbReference type="PRINTS" id="PR00990">
    <property type="entry name" value="RIBOKINASE"/>
</dbReference>
<dbReference type="SUPFAM" id="SSF53613">
    <property type="entry name" value="Ribokinase-like"/>
    <property type="match status" value="1"/>
</dbReference>
<dbReference type="PROSITE" id="PS00583">
    <property type="entry name" value="PFKB_KINASES_1"/>
    <property type="match status" value="1"/>
</dbReference>
<dbReference type="PROSITE" id="PS00584">
    <property type="entry name" value="PFKB_KINASES_2"/>
    <property type="match status" value="1"/>
</dbReference>
<accession>P26984</accession>
<keyword id="KW-0067">ATP-binding</keyword>
<keyword id="KW-0119">Carbohydrate metabolism</keyword>
<keyword id="KW-0418">Kinase</keyword>
<keyword id="KW-0547">Nucleotide-binding</keyword>
<keyword id="KW-0614">Plasmid</keyword>
<keyword id="KW-0808">Transferase</keyword>
<proteinExistence type="inferred from homology"/>
<sequence length="307" mass="32916">MNAKVWVLGDAVVDLLPESEGRLLQCPGGAPANVAVGVARLGGNSGFIGAVGGDPFGRYMRHTLQQEQVDVSHMYLDDQHRTSTVVVDLDDQGERTFTFMVRPSADLFLVEEDLPQFAAGQWLHVCSIALSAEPSRSTTFAAMESIRSAGGRVSFDPNIRPDLWQDQALLLACLDRALHMANVVKLSEEELVFISSSNDLAYGIASVTERYQPELLLVTRGKAGVLAAFQQKFTHFNARPVASVDTTGAGDAFVAGLLASLAANGMPTDMTALEPTLTLAQTCGALATTAKGAMTALPYQRDLNRQF</sequence>
<geneLocation type="plasmid">
    <name>pUR400</name>
</geneLocation>
<gene>
    <name type="primary">scrK</name>
</gene>
<evidence type="ECO:0000305" key="1"/>
<reference key="1">
    <citation type="journal article" date="1991" name="Mol. Microbiol.">
        <title>Molecular analysis of two fructokinases involved in sucrose metabolism of enteric bacteria.</title>
        <authorList>
            <person name="Aulkemeyer P."/>
            <person name="Ebner R."/>
            <person name="Heilenmann G."/>
            <person name="Jahreis K."/>
            <person name="Schmid K."/>
            <person name="Wrieden S."/>
            <person name="Lengeler J.W."/>
        </authorList>
    </citation>
    <scope>NUCLEOTIDE SEQUENCE [GENOMIC DNA]</scope>
</reference>
<protein>
    <recommendedName>
        <fullName>Fructokinase</fullName>
        <ecNumber>2.7.1.4</ecNumber>
    </recommendedName>
</protein>
<name>SCRK_SALTM</name>
<organism>
    <name type="scientific">Salmonella typhimurium</name>
    <dbReference type="NCBI Taxonomy" id="90371"/>
    <lineage>
        <taxon>Bacteria</taxon>
        <taxon>Pseudomonadati</taxon>
        <taxon>Pseudomonadota</taxon>
        <taxon>Gammaproteobacteria</taxon>
        <taxon>Enterobacterales</taxon>
        <taxon>Enterobacteriaceae</taxon>
        <taxon>Salmonella</taxon>
    </lineage>
</organism>
<comment type="catalytic activity">
    <reaction>
        <text>D-fructose + ATP = D-fructose 6-phosphate + ADP + H(+)</text>
        <dbReference type="Rhea" id="RHEA:16125"/>
        <dbReference type="ChEBI" id="CHEBI:15378"/>
        <dbReference type="ChEBI" id="CHEBI:30616"/>
        <dbReference type="ChEBI" id="CHEBI:37721"/>
        <dbReference type="ChEBI" id="CHEBI:61527"/>
        <dbReference type="ChEBI" id="CHEBI:456216"/>
        <dbReference type="EC" id="2.7.1.4"/>
    </reaction>
</comment>
<comment type="similarity">
    <text evidence="1">Belongs to the carbohydrate kinase PfkB family.</text>
</comment>
<feature type="chain" id="PRO_0000080138" description="Fructokinase">
    <location>
        <begin position="1"/>
        <end position="307"/>
    </location>
</feature>